<gene>
    <name evidence="1" type="primary">dapB</name>
    <name type="ordered locus">Ent638_0590</name>
</gene>
<organism>
    <name type="scientific">Enterobacter sp. (strain 638)</name>
    <dbReference type="NCBI Taxonomy" id="399742"/>
    <lineage>
        <taxon>Bacteria</taxon>
        <taxon>Pseudomonadati</taxon>
        <taxon>Pseudomonadota</taxon>
        <taxon>Gammaproteobacteria</taxon>
        <taxon>Enterobacterales</taxon>
        <taxon>Enterobacteriaceae</taxon>
        <taxon>Enterobacter</taxon>
    </lineage>
</organism>
<dbReference type="EC" id="1.17.1.8" evidence="1"/>
<dbReference type="EMBL" id="CP000653">
    <property type="protein sequence ID" value="ABP59277.1"/>
    <property type="molecule type" value="Genomic_DNA"/>
</dbReference>
<dbReference type="RefSeq" id="WP_012015999.1">
    <property type="nucleotide sequence ID" value="NC_009436.1"/>
</dbReference>
<dbReference type="SMR" id="A4W6E7"/>
<dbReference type="STRING" id="399742.Ent638_0590"/>
<dbReference type="KEGG" id="ent:Ent638_0590"/>
<dbReference type="eggNOG" id="COG0289">
    <property type="taxonomic scope" value="Bacteria"/>
</dbReference>
<dbReference type="HOGENOM" id="CLU_047479_2_1_6"/>
<dbReference type="OrthoDB" id="9790352at2"/>
<dbReference type="UniPathway" id="UPA00034">
    <property type="reaction ID" value="UER00018"/>
</dbReference>
<dbReference type="Proteomes" id="UP000000230">
    <property type="component" value="Chromosome"/>
</dbReference>
<dbReference type="GO" id="GO:0005829">
    <property type="term" value="C:cytosol"/>
    <property type="evidence" value="ECO:0007669"/>
    <property type="project" value="TreeGrafter"/>
</dbReference>
<dbReference type="GO" id="GO:0008839">
    <property type="term" value="F:4-hydroxy-tetrahydrodipicolinate reductase"/>
    <property type="evidence" value="ECO:0007669"/>
    <property type="project" value="UniProtKB-EC"/>
</dbReference>
<dbReference type="GO" id="GO:0051287">
    <property type="term" value="F:NAD binding"/>
    <property type="evidence" value="ECO:0007669"/>
    <property type="project" value="UniProtKB-UniRule"/>
</dbReference>
<dbReference type="GO" id="GO:0050661">
    <property type="term" value="F:NADP binding"/>
    <property type="evidence" value="ECO:0007669"/>
    <property type="project" value="UniProtKB-UniRule"/>
</dbReference>
<dbReference type="GO" id="GO:0016726">
    <property type="term" value="F:oxidoreductase activity, acting on CH or CH2 groups, NAD or NADP as acceptor"/>
    <property type="evidence" value="ECO:0007669"/>
    <property type="project" value="UniProtKB-UniRule"/>
</dbReference>
<dbReference type="GO" id="GO:0019877">
    <property type="term" value="P:diaminopimelate biosynthetic process"/>
    <property type="evidence" value="ECO:0007669"/>
    <property type="project" value="UniProtKB-UniRule"/>
</dbReference>
<dbReference type="GO" id="GO:0009089">
    <property type="term" value="P:lysine biosynthetic process via diaminopimelate"/>
    <property type="evidence" value="ECO:0007669"/>
    <property type="project" value="UniProtKB-UniRule"/>
</dbReference>
<dbReference type="CDD" id="cd02274">
    <property type="entry name" value="DHDPR_N"/>
    <property type="match status" value="1"/>
</dbReference>
<dbReference type="FunFam" id="3.30.360.10:FF:000004">
    <property type="entry name" value="4-hydroxy-tetrahydrodipicolinate reductase"/>
    <property type="match status" value="1"/>
</dbReference>
<dbReference type="FunFam" id="3.40.50.720:FF:000048">
    <property type="entry name" value="4-hydroxy-tetrahydrodipicolinate reductase"/>
    <property type="match status" value="1"/>
</dbReference>
<dbReference type="Gene3D" id="3.30.360.10">
    <property type="entry name" value="Dihydrodipicolinate Reductase, domain 2"/>
    <property type="match status" value="1"/>
</dbReference>
<dbReference type="Gene3D" id="3.40.50.720">
    <property type="entry name" value="NAD(P)-binding Rossmann-like Domain"/>
    <property type="match status" value="1"/>
</dbReference>
<dbReference type="HAMAP" id="MF_00102">
    <property type="entry name" value="DapB"/>
    <property type="match status" value="1"/>
</dbReference>
<dbReference type="InterPro" id="IPR022663">
    <property type="entry name" value="DapB_C"/>
</dbReference>
<dbReference type="InterPro" id="IPR000846">
    <property type="entry name" value="DapB_N"/>
</dbReference>
<dbReference type="InterPro" id="IPR022664">
    <property type="entry name" value="DapB_N_CS"/>
</dbReference>
<dbReference type="InterPro" id="IPR023940">
    <property type="entry name" value="DHDPR_bac"/>
</dbReference>
<dbReference type="InterPro" id="IPR036291">
    <property type="entry name" value="NAD(P)-bd_dom_sf"/>
</dbReference>
<dbReference type="NCBIfam" id="TIGR00036">
    <property type="entry name" value="dapB"/>
    <property type="match status" value="1"/>
</dbReference>
<dbReference type="PANTHER" id="PTHR20836:SF0">
    <property type="entry name" value="4-HYDROXY-TETRAHYDRODIPICOLINATE REDUCTASE 1, CHLOROPLASTIC-RELATED"/>
    <property type="match status" value="1"/>
</dbReference>
<dbReference type="PANTHER" id="PTHR20836">
    <property type="entry name" value="DIHYDRODIPICOLINATE REDUCTASE"/>
    <property type="match status" value="1"/>
</dbReference>
<dbReference type="Pfam" id="PF05173">
    <property type="entry name" value="DapB_C"/>
    <property type="match status" value="1"/>
</dbReference>
<dbReference type="Pfam" id="PF01113">
    <property type="entry name" value="DapB_N"/>
    <property type="match status" value="1"/>
</dbReference>
<dbReference type="PIRSF" id="PIRSF000161">
    <property type="entry name" value="DHPR"/>
    <property type="match status" value="1"/>
</dbReference>
<dbReference type="SUPFAM" id="SSF55347">
    <property type="entry name" value="Glyceraldehyde-3-phosphate dehydrogenase-like, C-terminal domain"/>
    <property type="match status" value="1"/>
</dbReference>
<dbReference type="SUPFAM" id="SSF51735">
    <property type="entry name" value="NAD(P)-binding Rossmann-fold domains"/>
    <property type="match status" value="1"/>
</dbReference>
<dbReference type="PROSITE" id="PS01298">
    <property type="entry name" value="DAPB"/>
    <property type="match status" value="1"/>
</dbReference>
<reference key="1">
    <citation type="journal article" date="2010" name="PLoS Genet.">
        <title>Genome sequence of the plant growth promoting endophytic bacterium Enterobacter sp. 638.</title>
        <authorList>
            <person name="Taghavi S."/>
            <person name="van der Lelie D."/>
            <person name="Hoffman A."/>
            <person name="Zhang Y.B."/>
            <person name="Walla M.D."/>
            <person name="Vangronsveld J."/>
            <person name="Newman L."/>
            <person name="Monchy S."/>
        </authorList>
    </citation>
    <scope>NUCLEOTIDE SEQUENCE [LARGE SCALE GENOMIC DNA]</scope>
    <source>
        <strain>638</strain>
    </source>
</reference>
<protein>
    <recommendedName>
        <fullName evidence="1">4-hydroxy-tetrahydrodipicolinate reductase</fullName>
        <shortName evidence="1">HTPA reductase</shortName>
        <ecNumber evidence="1">1.17.1.8</ecNumber>
    </recommendedName>
</protein>
<keyword id="KW-0028">Amino-acid biosynthesis</keyword>
<keyword id="KW-0963">Cytoplasm</keyword>
<keyword id="KW-0220">Diaminopimelate biosynthesis</keyword>
<keyword id="KW-0457">Lysine biosynthesis</keyword>
<keyword id="KW-0520">NAD</keyword>
<keyword id="KW-0521">NADP</keyword>
<keyword id="KW-0560">Oxidoreductase</keyword>
<feature type="chain" id="PRO_1000057685" description="4-hydroxy-tetrahydrodipicolinate reductase">
    <location>
        <begin position="1"/>
        <end position="273"/>
    </location>
</feature>
<feature type="active site" description="Proton donor/acceptor" evidence="1">
    <location>
        <position position="159"/>
    </location>
</feature>
<feature type="active site" description="Proton donor" evidence="1">
    <location>
        <position position="163"/>
    </location>
</feature>
<feature type="binding site" evidence="1">
    <location>
        <begin position="12"/>
        <end position="17"/>
    </location>
    <ligand>
        <name>NAD(+)</name>
        <dbReference type="ChEBI" id="CHEBI:57540"/>
    </ligand>
</feature>
<feature type="binding site" evidence="1">
    <location>
        <position position="38"/>
    </location>
    <ligand>
        <name>NAD(+)</name>
        <dbReference type="ChEBI" id="CHEBI:57540"/>
    </ligand>
</feature>
<feature type="binding site" evidence="1">
    <location>
        <position position="39"/>
    </location>
    <ligand>
        <name>NADP(+)</name>
        <dbReference type="ChEBI" id="CHEBI:58349"/>
    </ligand>
</feature>
<feature type="binding site" evidence="1">
    <location>
        <begin position="102"/>
        <end position="104"/>
    </location>
    <ligand>
        <name>NAD(+)</name>
        <dbReference type="ChEBI" id="CHEBI:57540"/>
    </ligand>
</feature>
<feature type="binding site" evidence="1">
    <location>
        <begin position="126"/>
        <end position="129"/>
    </location>
    <ligand>
        <name>NAD(+)</name>
        <dbReference type="ChEBI" id="CHEBI:57540"/>
    </ligand>
</feature>
<feature type="binding site" evidence="1">
    <location>
        <position position="160"/>
    </location>
    <ligand>
        <name>(S)-2,3,4,5-tetrahydrodipicolinate</name>
        <dbReference type="ChEBI" id="CHEBI:16845"/>
    </ligand>
</feature>
<feature type="binding site" evidence="1">
    <location>
        <begin position="169"/>
        <end position="170"/>
    </location>
    <ligand>
        <name>(S)-2,3,4,5-tetrahydrodipicolinate</name>
        <dbReference type="ChEBI" id="CHEBI:16845"/>
    </ligand>
</feature>
<comment type="function">
    <text evidence="1">Catalyzes the conversion of 4-hydroxy-tetrahydrodipicolinate (HTPA) to tetrahydrodipicolinate.</text>
</comment>
<comment type="catalytic activity">
    <reaction evidence="1">
        <text>(S)-2,3,4,5-tetrahydrodipicolinate + NAD(+) + H2O = (2S,4S)-4-hydroxy-2,3,4,5-tetrahydrodipicolinate + NADH + H(+)</text>
        <dbReference type="Rhea" id="RHEA:35323"/>
        <dbReference type="ChEBI" id="CHEBI:15377"/>
        <dbReference type="ChEBI" id="CHEBI:15378"/>
        <dbReference type="ChEBI" id="CHEBI:16845"/>
        <dbReference type="ChEBI" id="CHEBI:57540"/>
        <dbReference type="ChEBI" id="CHEBI:57945"/>
        <dbReference type="ChEBI" id="CHEBI:67139"/>
        <dbReference type="EC" id="1.17.1.8"/>
    </reaction>
</comment>
<comment type="catalytic activity">
    <reaction evidence="1">
        <text>(S)-2,3,4,5-tetrahydrodipicolinate + NADP(+) + H2O = (2S,4S)-4-hydroxy-2,3,4,5-tetrahydrodipicolinate + NADPH + H(+)</text>
        <dbReference type="Rhea" id="RHEA:35331"/>
        <dbReference type="ChEBI" id="CHEBI:15377"/>
        <dbReference type="ChEBI" id="CHEBI:15378"/>
        <dbReference type="ChEBI" id="CHEBI:16845"/>
        <dbReference type="ChEBI" id="CHEBI:57783"/>
        <dbReference type="ChEBI" id="CHEBI:58349"/>
        <dbReference type="ChEBI" id="CHEBI:67139"/>
        <dbReference type="EC" id="1.17.1.8"/>
    </reaction>
</comment>
<comment type="pathway">
    <text evidence="1">Amino-acid biosynthesis; L-lysine biosynthesis via DAP pathway; (S)-tetrahydrodipicolinate from L-aspartate: step 4/4.</text>
</comment>
<comment type="subunit">
    <text evidence="1">Homotetramer.</text>
</comment>
<comment type="subcellular location">
    <subcellularLocation>
        <location evidence="1">Cytoplasm</location>
    </subcellularLocation>
</comment>
<comment type="similarity">
    <text evidence="1">Belongs to the DapB family.</text>
</comment>
<comment type="caution">
    <text evidence="2">Was originally thought to be a dihydrodipicolinate reductase (DHDPR), catalyzing the conversion of dihydrodipicolinate to tetrahydrodipicolinate. However, it was shown in E.coli that the substrate of the enzymatic reaction is not dihydrodipicolinate (DHDP) but in fact (2S,4S)-4-hydroxy-2,3,4,5-tetrahydrodipicolinic acid (HTPA), the product released by the DapA-catalyzed reaction.</text>
</comment>
<sequence length="273" mass="28874">MHDAQVRVAIAGAGGRMGRQLIQAALQMEGVVLGAALEREGSTLLGTDAGELAGAGHSGVTVQSSLDAVKADFDVFIDFTRPEGTLEHLAFCRQHGKGMIIGTTGFDDAGKQAIKDAAQDIAIVFAANFSVGVNVMLKLLEKAAKVMGDYTDIEIIEAHHRHKVDAPSGTALAMGEAIAYALDKDLKDCAVYTREGHTGERVPGTIGFATVRAGDIVGEHTAIFADIGERVEITHKASSRMTFANGAVRSALWLKSKGNGLFDMRDVLNLNEL</sequence>
<evidence type="ECO:0000255" key="1">
    <source>
        <dbReference type="HAMAP-Rule" id="MF_00102"/>
    </source>
</evidence>
<evidence type="ECO:0000305" key="2"/>
<proteinExistence type="inferred from homology"/>
<name>DAPB_ENT38</name>
<accession>A4W6E7</accession>